<accession>Q8E346</accession>
<name>LACC2_STRA3</name>
<proteinExistence type="inferred from homology"/>
<reference key="1">
    <citation type="journal article" date="2002" name="Mol. Microbiol.">
        <title>Genome sequence of Streptococcus agalactiae, a pathogen causing invasive neonatal disease.</title>
        <authorList>
            <person name="Glaser P."/>
            <person name="Rusniok C."/>
            <person name="Buchrieser C."/>
            <person name="Chevalier F."/>
            <person name="Frangeul L."/>
            <person name="Msadek T."/>
            <person name="Zouine M."/>
            <person name="Couve E."/>
            <person name="Lalioui L."/>
            <person name="Poyart C."/>
            <person name="Trieu-Cuot P."/>
            <person name="Kunst F."/>
        </authorList>
    </citation>
    <scope>NUCLEOTIDE SEQUENCE [LARGE SCALE GENOMIC DNA]</scope>
    <source>
        <strain>NEM316</strain>
    </source>
</reference>
<sequence>MILTVTLNPSIDISYCLENFNMDTVNRVTDVSKTPGGKGLNVTRVLSQLGDNVVATGLLGGDFGDFIRSGLDALEIRHQFLSIGGETRHCIAVLHEGQQTEILEKGPHITKDEADAFLNHLKLIFDAATIITVSGSLPKGLPSDYYARLISLANHFNKKVVLDCSGEALRSVLKSSAKPTVIKPNLEELTQLIGKPISYSLDELKSTLQQDLFRGIDWVIVSLGARGAFAKHGNHYYQVTIPKIEVINPVGSGDATVAGIASALEHQLDDTNLLKRANVLGMLNAQETLTGHINLTYYQELISQIQVKEV</sequence>
<feature type="chain" id="PRO_0000203928" description="Tagatose-6-phosphate kinase 2">
    <location>
        <begin position="1"/>
        <end position="310"/>
    </location>
</feature>
<keyword id="KW-0067">ATP-binding</keyword>
<keyword id="KW-0418">Kinase</keyword>
<keyword id="KW-0423">Lactose metabolism</keyword>
<keyword id="KW-0547">Nucleotide-binding</keyword>
<keyword id="KW-0808">Transferase</keyword>
<evidence type="ECO:0000255" key="1">
    <source>
        <dbReference type="HAMAP-Rule" id="MF_01557"/>
    </source>
</evidence>
<organism>
    <name type="scientific">Streptococcus agalactiae serotype III (strain NEM316)</name>
    <dbReference type="NCBI Taxonomy" id="211110"/>
    <lineage>
        <taxon>Bacteria</taxon>
        <taxon>Bacillati</taxon>
        <taxon>Bacillota</taxon>
        <taxon>Bacilli</taxon>
        <taxon>Lactobacillales</taxon>
        <taxon>Streptococcaceae</taxon>
        <taxon>Streptococcus</taxon>
    </lineage>
</organism>
<dbReference type="EC" id="2.7.1.144" evidence="1"/>
<dbReference type="EMBL" id="AL766854">
    <property type="protein sequence ID" value="CAD47575.1"/>
    <property type="molecule type" value="Genomic_DNA"/>
</dbReference>
<dbReference type="RefSeq" id="WP_000604238.1">
    <property type="nucleotide sequence ID" value="NC_004368.1"/>
</dbReference>
<dbReference type="SMR" id="Q8E346"/>
<dbReference type="KEGG" id="san:gbs1916"/>
<dbReference type="eggNOG" id="COG1105">
    <property type="taxonomic scope" value="Bacteria"/>
</dbReference>
<dbReference type="HOGENOM" id="CLU_050013_5_0_9"/>
<dbReference type="UniPathway" id="UPA00704">
    <property type="reaction ID" value="UER00715"/>
</dbReference>
<dbReference type="Proteomes" id="UP000000823">
    <property type="component" value="Chromosome"/>
</dbReference>
<dbReference type="GO" id="GO:0005829">
    <property type="term" value="C:cytosol"/>
    <property type="evidence" value="ECO:0007669"/>
    <property type="project" value="TreeGrafter"/>
</dbReference>
<dbReference type="GO" id="GO:0005524">
    <property type="term" value="F:ATP binding"/>
    <property type="evidence" value="ECO:0007669"/>
    <property type="project" value="UniProtKB-KW"/>
</dbReference>
<dbReference type="GO" id="GO:0008443">
    <property type="term" value="F:phosphofructokinase activity"/>
    <property type="evidence" value="ECO:0007669"/>
    <property type="project" value="TreeGrafter"/>
</dbReference>
<dbReference type="GO" id="GO:0009024">
    <property type="term" value="F:tagatose-6-phosphate kinase activity"/>
    <property type="evidence" value="ECO:0007669"/>
    <property type="project" value="UniProtKB-UniRule"/>
</dbReference>
<dbReference type="GO" id="GO:2001059">
    <property type="term" value="P:D-tagatose 6-phosphate catabolic process"/>
    <property type="evidence" value="ECO:0007669"/>
    <property type="project" value="UniProtKB-UniRule"/>
</dbReference>
<dbReference type="GO" id="GO:0019512">
    <property type="term" value="P:lactose catabolic process via tagatose-6-phosphate"/>
    <property type="evidence" value="ECO:0007669"/>
    <property type="project" value="InterPro"/>
</dbReference>
<dbReference type="CDD" id="cd01164">
    <property type="entry name" value="FruK_PfkB_like"/>
    <property type="match status" value="1"/>
</dbReference>
<dbReference type="FunFam" id="3.40.1190.20:FF:000001">
    <property type="entry name" value="Phosphofructokinase"/>
    <property type="match status" value="1"/>
</dbReference>
<dbReference type="Gene3D" id="3.40.1190.20">
    <property type="match status" value="1"/>
</dbReference>
<dbReference type="HAMAP" id="MF_01557">
    <property type="entry name" value="LacC"/>
    <property type="match status" value="1"/>
</dbReference>
<dbReference type="InterPro" id="IPR002173">
    <property type="entry name" value="Carboh/pur_kinase_PfkB_CS"/>
</dbReference>
<dbReference type="InterPro" id="IPR005926">
    <property type="entry name" value="LacC"/>
</dbReference>
<dbReference type="InterPro" id="IPR011611">
    <property type="entry name" value="PfkB_dom"/>
</dbReference>
<dbReference type="InterPro" id="IPR029056">
    <property type="entry name" value="Ribokinase-like"/>
</dbReference>
<dbReference type="InterPro" id="IPR017583">
    <property type="entry name" value="Tagatose/fructose_Pkinase"/>
</dbReference>
<dbReference type="NCBIfam" id="TIGR03168">
    <property type="entry name" value="1-PFK"/>
    <property type="match status" value="1"/>
</dbReference>
<dbReference type="NCBIfam" id="TIGR01231">
    <property type="entry name" value="lacC"/>
    <property type="match status" value="1"/>
</dbReference>
<dbReference type="NCBIfam" id="NF010033">
    <property type="entry name" value="PRK13508.1"/>
    <property type="match status" value="1"/>
</dbReference>
<dbReference type="PANTHER" id="PTHR46566:SF5">
    <property type="entry name" value="1-PHOSPHOFRUCTOKINASE"/>
    <property type="match status" value="1"/>
</dbReference>
<dbReference type="PANTHER" id="PTHR46566">
    <property type="entry name" value="1-PHOSPHOFRUCTOKINASE-RELATED"/>
    <property type="match status" value="1"/>
</dbReference>
<dbReference type="Pfam" id="PF00294">
    <property type="entry name" value="PfkB"/>
    <property type="match status" value="1"/>
</dbReference>
<dbReference type="PIRSF" id="PIRSF000535">
    <property type="entry name" value="1PFK/6PFK/LacC"/>
    <property type="match status" value="1"/>
</dbReference>
<dbReference type="SUPFAM" id="SSF53613">
    <property type="entry name" value="Ribokinase-like"/>
    <property type="match status" value="1"/>
</dbReference>
<dbReference type="PROSITE" id="PS00583">
    <property type="entry name" value="PFKB_KINASES_1"/>
    <property type="match status" value="1"/>
</dbReference>
<dbReference type="PROSITE" id="PS00584">
    <property type="entry name" value="PFKB_KINASES_2"/>
    <property type="match status" value="1"/>
</dbReference>
<comment type="catalytic activity">
    <reaction evidence="1">
        <text>D-tagatofuranose 6-phosphate + ATP = D-tagatofuranose 1,6-bisphosphate + ADP + H(+)</text>
        <dbReference type="Rhea" id="RHEA:12420"/>
        <dbReference type="ChEBI" id="CHEBI:15378"/>
        <dbReference type="ChEBI" id="CHEBI:30616"/>
        <dbReference type="ChEBI" id="CHEBI:58694"/>
        <dbReference type="ChEBI" id="CHEBI:58695"/>
        <dbReference type="ChEBI" id="CHEBI:456216"/>
        <dbReference type="EC" id="2.7.1.144"/>
    </reaction>
</comment>
<comment type="pathway">
    <text evidence="1">Carbohydrate metabolism; D-tagatose 6-phosphate degradation; D-glyceraldehyde 3-phosphate and glycerone phosphate from D-tagatose 6-phosphate: step 1/2.</text>
</comment>
<comment type="similarity">
    <text evidence="1">Belongs to the carbohydrate kinase PfkB family. LacC subfamily.</text>
</comment>
<gene>
    <name evidence="1" type="primary">lacC2</name>
    <name type="ordered locus">gbs1916</name>
</gene>
<protein>
    <recommendedName>
        <fullName evidence="1">Tagatose-6-phosphate kinase 2</fullName>
        <ecNumber evidence="1">2.7.1.144</ecNumber>
    </recommendedName>
    <alternativeName>
        <fullName evidence="1">Phosphotagatokinase 2</fullName>
    </alternativeName>
</protein>